<keyword id="KW-1185">Reference proteome</keyword>
<evidence type="ECO:0000255" key="1">
    <source>
        <dbReference type="HAMAP-Rule" id="MF_01845"/>
    </source>
</evidence>
<name>Y1109_DESHY</name>
<accession>Q24YJ4</accession>
<organism>
    <name type="scientific">Desulfitobacterium hafniense (strain Y51)</name>
    <dbReference type="NCBI Taxonomy" id="138119"/>
    <lineage>
        <taxon>Bacteria</taxon>
        <taxon>Bacillati</taxon>
        <taxon>Bacillota</taxon>
        <taxon>Clostridia</taxon>
        <taxon>Eubacteriales</taxon>
        <taxon>Desulfitobacteriaceae</taxon>
        <taxon>Desulfitobacterium</taxon>
    </lineage>
</organism>
<comment type="similarity">
    <text evidence="1">Belongs to the UPF0597 family.</text>
</comment>
<protein>
    <recommendedName>
        <fullName evidence="1">UPF0597 protein DSY1109</fullName>
    </recommendedName>
</protein>
<feature type="chain" id="PRO_0000339811" description="UPF0597 protein DSY1109">
    <location>
        <begin position="1"/>
        <end position="430"/>
    </location>
</feature>
<proteinExistence type="inferred from homology"/>
<reference key="1">
    <citation type="journal article" date="2006" name="J. Bacteriol.">
        <title>Complete genome sequence of the dehalorespiring bacterium Desulfitobacterium hafniense Y51 and comparison with Dehalococcoides ethenogenes 195.</title>
        <authorList>
            <person name="Nonaka H."/>
            <person name="Keresztes G."/>
            <person name="Shinoda Y."/>
            <person name="Ikenaga Y."/>
            <person name="Abe M."/>
            <person name="Naito K."/>
            <person name="Inatomi K."/>
            <person name="Furukawa K."/>
            <person name="Inui M."/>
            <person name="Yukawa H."/>
        </authorList>
    </citation>
    <scope>NUCLEOTIDE SEQUENCE [LARGE SCALE GENOMIC DNA]</scope>
    <source>
        <strain>Y51</strain>
    </source>
</reference>
<dbReference type="EMBL" id="AP008230">
    <property type="protein sequence ID" value="BAE82898.1"/>
    <property type="molecule type" value="Genomic_DNA"/>
</dbReference>
<dbReference type="SMR" id="Q24YJ4"/>
<dbReference type="STRING" id="138119.DSY1109"/>
<dbReference type="KEGG" id="dsy:DSY1109"/>
<dbReference type="eggNOG" id="COG3681">
    <property type="taxonomic scope" value="Bacteria"/>
</dbReference>
<dbReference type="HOGENOM" id="CLU_051840_0_0_9"/>
<dbReference type="Proteomes" id="UP000001946">
    <property type="component" value="Chromosome"/>
</dbReference>
<dbReference type="GO" id="GO:0080146">
    <property type="term" value="F:L-cysteine desulfhydrase activity"/>
    <property type="evidence" value="ECO:0007669"/>
    <property type="project" value="TreeGrafter"/>
</dbReference>
<dbReference type="GO" id="GO:0019450">
    <property type="term" value="P:L-cysteine catabolic process to pyruvate"/>
    <property type="evidence" value="ECO:0007669"/>
    <property type="project" value="TreeGrafter"/>
</dbReference>
<dbReference type="HAMAP" id="MF_01845">
    <property type="entry name" value="UPF0597"/>
    <property type="match status" value="1"/>
</dbReference>
<dbReference type="InterPro" id="IPR005130">
    <property type="entry name" value="Ser_deHydtase-like_asu"/>
</dbReference>
<dbReference type="InterPro" id="IPR021144">
    <property type="entry name" value="UPF0597"/>
</dbReference>
<dbReference type="PANTHER" id="PTHR30501">
    <property type="entry name" value="UPF0597 PROTEIN YHAM"/>
    <property type="match status" value="1"/>
</dbReference>
<dbReference type="PANTHER" id="PTHR30501:SF2">
    <property type="entry name" value="UPF0597 PROTEIN YHAM"/>
    <property type="match status" value="1"/>
</dbReference>
<dbReference type="Pfam" id="PF03313">
    <property type="entry name" value="SDH_alpha"/>
    <property type="match status" value="1"/>
</dbReference>
<dbReference type="PIRSF" id="PIRSF006054">
    <property type="entry name" value="UCP006054"/>
    <property type="match status" value="1"/>
</dbReference>
<sequence length="430" mass="45805">MFMERQDRYYQTYLNILKEELVAAMGCTEPIAIAYGAAKAREVLGAVPHKVVLEVSSNIIKNVKSVVVPNTDGLKGIEAATAAGIIAGRSDKILEVIAEVCQAEKQQIKTYLSETDIEVKLADSQIIFDIMITMFHQDSYVKLRIADYHTHIVHIEKNGEIIFGTGDLDAGISSLTDRKLLSVSKIIEFADSVRIEDVKELLDKQIEYNSAIARAGMEGNYGANVGRVLLKTYGNDVKIRAKAMAAAGSDARMSGCELPVIINSGSGNQGMTASLPVIEYAAELQSGEEKLYRALVVSNLITLHLKTGIGRLSAFCGVICAGCGSGAGIAYLHGGGYDEIAHTIVNAAAIVSGIVCDGAKPSCAGKIAAAVDAGILGYLMYKEGQQFRGGDGIVAKGIENTIANIGYLGKVGMKETDKEIINIMLNQCSS</sequence>
<gene>
    <name type="ordered locus">DSY1109</name>
</gene>